<accession>Q97I56</accession>
<sequence>MQRIETRKVKVGSVYVGGDSRVTVQSMTNTDTRDSKKTIEQIKKLEIAGCDIVRCAVPDFDAASSLSEITKNVKLPVVADIHFDYRLALEAIKNGVSALRINPGNIGSKERVELVAKSAKEKNIPIRIGVNSGSLEKDILNKYKRVCSEALVESALNHVKILEDVNFNDIVISIKSSNVQMMIDSYRLISKEVNYPLHLGVTEAGTIWRGTIKSSIGIGTLLSEGIGDTIRVSLTGDPVEEVKVGREILKTFGYLKSGVEFISCPTCGRTSIDLIKIANEVEKRLEKTNKSIKVAVMGCVVNGPGEAREADIGIAGGKGEGLIFKKGEIIKKVKEENLVDELMREIDNM</sequence>
<protein>
    <recommendedName>
        <fullName evidence="1">4-hydroxy-3-methylbut-2-en-1-yl diphosphate synthase (flavodoxin)</fullName>
        <ecNumber evidence="1">1.17.7.3</ecNumber>
    </recommendedName>
    <alternativeName>
        <fullName evidence="1">1-hydroxy-2-methyl-2-(E)-butenyl 4-diphosphate synthase</fullName>
    </alternativeName>
</protein>
<dbReference type="EC" id="1.17.7.3" evidence="1"/>
<dbReference type="EMBL" id="AE001437">
    <property type="protein sequence ID" value="AAK79762.1"/>
    <property type="molecule type" value="Genomic_DNA"/>
</dbReference>
<dbReference type="PIR" id="G97121">
    <property type="entry name" value="G97121"/>
</dbReference>
<dbReference type="RefSeq" id="NP_348422.1">
    <property type="nucleotide sequence ID" value="NC_003030.1"/>
</dbReference>
<dbReference type="RefSeq" id="WP_010965103.1">
    <property type="nucleotide sequence ID" value="NC_003030.1"/>
</dbReference>
<dbReference type="SMR" id="Q97I56"/>
<dbReference type="STRING" id="272562.CA_C1797"/>
<dbReference type="GeneID" id="44998291"/>
<dbReference type="KEGG" id="cac:CA_C1797"/>
<dbReference type="PATRIC" id="fig|272562.8.peg.2003"/>
<dbReference type="eggNOG" id="COG0821">
    <property type="taxonomic scope" value="Bacteria"/>
</dbReference>
<dbReference type="HOGENOM" id="CLU_042258_0_0_9"/>
<dbReference type="OrthoDB" id="9803214at2"/>
<dbReference type="UniPathway" id="UPA00056">
    <property type="reaction ID" value="UER00096"/>
</dbReference>
<dbReference type="Proteomes" id="UP000000814">
    <property type="component" value="Chromosome"/>
</dbReference>
<dbReference type="GO" id="GO:0051539">
    <property type="term" value="F:4 iron, 4 sulfur cluster binding"/>
    <property type="evidence" value="ECO:0007669"/>
    <property type="project" value="UniProtKB-UniRule"/>
</dbReference>
<dbReference type="GO" id="GO:0046429">
    <property type="term" value="F:4-hydroxy-3-methylbut-2-en-1-yl diphosphate synthase activity (ferredoxin)"/>
    <property type="evidence" value="ECO:0007669"/>
    <property type="project" value="UniProtKB-UniRule"/>
</dbReference>
<dbReference type="GO" id="GO:0141197">
    <property type="term" value="F:4-hydroxy-3-methylbut-2-enyl-diphosphate synthase activity (flavodoxin)"/>
    <property type="evidence" value="ECO:0007669"/>
    <property type="project" value="UniProtKB-EC"/>
</dbReference>
<dbReference type="GO" id="GO:0005506">
    <property type="term" value="F:iron ion binding"/>
    <property type="evidence" value="ECO:0007669"/>
    <property type="project" value="InterPro"/>
</dbReference>
<dbReference type="GO" id="GO:0019288">
    <property type="term" value="P:isopentenyl diphosphate biosynthetic process, methylerythritol 4-phosphate pathway"/>
    <property type="evidence" value="ECO:0007669"/>
    <property type="project" value="UniProtKB-UniRule"/>
</dbReference>
<dbReference type="GO" id="GO:0016114">
    <property type="term" value="P:terpenoid biosynthetic process"/>
    <property type="evidence" value="ECO:0007669"/>
    <property type="project" value="InterPro"/>
</dbReference>
<dbReference type="FunFam" id="3.20.20.20:FF:000001">
    <property type="entry name" value="4-hydroxy-3-methylbut-2-en-1-yl diphosphate synthase (flavodoxin)"/>
    <property type="match status" value="1"/>
</dbReference>
<dbReference type="FunFam" id="3.30.413.10:FF:000005">
    <property type="entry name" value="4-hydroxy-3-methylbut-2-en-1-yl diphosphate synthase (flavodoxin)"/>
    <property type="match status" value="1"/>
</dbReference>
<dbReference type="Gene3D" id="3.20.20.20">
    <property type="entry name" value="Dihydropteroate synthase-like"/>
    <property type="match status" value="1"/>
</dbReference>
<dbReference type="Gene3D" id="3.30.413.10">
    <property type="entry name" value="Sulfite Reductase Hemoprotein, domain 1"/>
    <property type="match status" value="1"/>
</dbReference>
<dbReference type="HAMAP" id="MF_00159">
    <property type="entry name" value="IspG"/>
    <property type="match status" value="1"/>
</dbReference>
<dbReference type="InterPro" id="IPR011005">
    <property type="entry name" value="Dihydropteroate_synth-like_sf"/>
</dbReference>
<dbReference type="InterPro" id="IPR016425">
    <property type="entry name" value="IspG_bac"/>
</dbReference>
<dbReference type="InterPro" id="IPR004588">
    <property type="entry name" value="IspG_bac-typ"/>
</dbReference>
<dbReference type="InterPro" id="IPR045854">
    <property type="entry name" value="NO2/SO3_Rdtase_4Fe4S_sf"/>
</dbReference>
<dbReference type="NCBIfam" id="TIGR00612">
    <property type="entry name" value="ispG_gcpE"/>
    <property type="match status" value="1"/>
</dbReference>
<dbReference type="NCBIfam" id="NF001540">
    <property type="entry name" value="PRK00366.1"/>
    <property type="match status" value="1"/>
</dbReference>
<dbReference type="PANTHER" id="PTHR30454">
    <property type="entry name" value="4-HYDROXY-3-METHYLBUT-2-EN-1-YL DIPHOSPHATE SYNTHASE"/>
    <property type="match status" value="1"/>
</dbReference>
<dbReference type="PANTHER" id="PTHR30454:SF0">
    <property type="entry name" value="4-HYDROXY-3-METHYLBUT-2-EN-1-YL DIPHOSPHATE SYNTHASE (FERREDOXIN), CHLOROPLASTIC"/>
    <property type="match status" value="1"/>
</dbReference>
<dbReference type="Pfam" id="PF04551">
    <property type="entry name" value="GcpE"/>
    <property type="match status" value="1"/>
</dbReference>
<dbReference type="PIRSF" id="PIRSF004640">
    <property type="entry name" value="IspG"/>
    <property type="match status" value="1"/>
</dbReference>
<dbReference type="SUPFAM" id="SSF51717">
    <property type="entry name" value="Dihydropteroate synthetase-like"/>
    <property type="match status" value="1"/>
</dbReference>
<dbReference type="SUPFAM" id="SSF56014">
    <property type="entry name" value="Nitrite and sulphite reductase 4Fe-4S domain-like"/>
    <property type="match status" value="1"/>
</dbReference>
<comment type="function">
    <text evidence="1">Converts 2C-methyl-D-erythritol 2,4-cyclodiphosphate (ME-2,4cPP) into 1-hydroxy-2-methyl-2-(E)-butenyl 4-diphosphate.</text>
</comment>
<comment type="catalytic activity">
    <reaction evidence="1">
        <text>(2E)-4-hydroxy-3-methylbut-2-enyl diphosphate + oxidized [flavodoxin] + H2O + 2 H(+) = 2-C-methyl-D-erythritol 2,4-cyclic diphosphate + reduced [flavodoxin]</text>
        <dbReference type="Rhea" id="RHEA:43604"/>
        <dbReference type="Rhea" id="RHEA-COMP:10622"/>
        <dbReference type="Rhea" id="RHEA-COMP:10623"/>
        <dbReference type="ChEBI" id="CHEBI:15377"/>
        <dbReference type="ChEBI" id="CHEBI:15378"/>
        <dbReference type="ChEBI" id="CHEBI:57618"/>
        <dbReference type="ChEBI" id="CHEBI:58210"/>
        <dbReference type="ChEBI" id="CHEBI:58483"/>
        <dbReference type="ChEBI" id="CHEBI:128753"/>
        <dbReference type="EC" id="1.17.7.3"/>
    </reaction>
</comment>
<comment type="cofactor">
    <cofactor evidence="1">
        <name>[4Fe-4S] cluster</name>
        <dbReference type="ChEBI" id="CHEBI:49883"/>
    </cofactor>
    <text evidence="1">Binds 1 [4Fe-4S] cluster.</text>
</comment>
<comment type="pathway">
    <text evidence="1">Isoprenoid biosynthesis; isopentenyl diphosphate biosynthesis via DXP pathway; isopentenyl diphosphate from 1-deoxy-D-xylulose 5-phosphate: step 5/6.</text>
</comment>
<comment type="similarity">
    <text evidence="1">Belongs to the IspG family.</text>
</comment>
<proteinExistence type="inferred from homology"/>
<keyword id="KW-0004">4Fe-4S</keyword>
<keyword id="KW-0408">Iron</keyword>
<keyword id="KW-0411">Iron-sulfur</keyword>
<keyword id="KW-0414">Isoprene biosynthesis</keyword>
<keyword id="KW-0479">Metal-binding</keyword>
<keyword id="KW-0560">Oxidoreductase</keyword>
<keyword id="KW-1185">Reference proteome</keyword>
<gene>
    <name evidence="1" type="primary">ispG</name>
    <name type="ordered locus">CA_C1797</name>
</gene>
<reference key="1">
    <citation type="journal article" date="2001" name="J. Bacteriol.">
        <title>Genome sequence and comparative analysis of the solvent-producing bacterium Clostridium acetobutylicum.</title>
        <authorList>
            <person name="Noelling J."/>
            <person name="Breton G."/>
            <person name="Omelchenko M.V."/>
            <person name="Makarova K.S."/>
            <person name="Zeng Q."/>
            <person name="Gibson R."/>
            <person name="Lee H.M."/>
            <person name="Dubois J."/>
            <person name="Qiu D."/>
            <person name="Hitti J."/>
            <person name="Wolf Y.I."/>
            <person name="Tatusov R.L."/>
            <person name="Sabathe F."/>
            <person name="Doucette-Stamm L.A."/>
            <person name="Soucaille P."/>
            <person name="Daly M.J."/>
            <person name="Bennett G.N."/>
            <person name="Koonin E.V."/>
            <person name="Smith D.R."/>
        </authorList>
    </citation>
    <scope>NUCLEOTIDE SEQUENCE [LARGE SCALE GENOMIC DNA]</scope>
    <source>
        <strain>ATCC 824 / DSM 792 / JCM 1419 / IAM 19013 / LMG 5710 / NBRC 13948 / NRRL B-527 / VKM B-1787 / 2291 / W</strain>
    </source>
</reference>
<evidence type="ECO:0000255" key="1">
    <source>
        <dbReference type="HAMAP-Rule" id="MF_00159"/>
    </source>
</evidence>
<feature type="chain" id="PRO_0000190563" description="4-hydroxy-3-methylbut-2-en-1-yl diphosphate synthase (flavodoxin)">
    <location>
        <begin position="1"/>
        <end position="349"/>
    </location>
</feature>
<feature type="binding site" evidence="1">
    <location>
        <position position="264"/>
    </location>
    <ligand>
        <name>[4Fe-4S] cluster</name>
        <dbReference type="ChEBI" id="CHEBI:49883"/>
    </ligand>
</feature>
<feature type="binding site" evidence="1">
    <location>
        <position position="267"/>
    </location>
    <ligand>
        <name>[4Fe-4S] cluster</name>
        <dbReference type="ChEBI" id="CHEBI:49883"/>
    </ligand>
</feature>
<feature type="binding site" evidence="1">
    <location>
        <position position="299"/>
    </location>
    <ligand>
        <name>[4Fe-4S] cluster</name>
        <dbReference type="ChEBI" id="CHEBI:49883"/>
    </ligand>
</feature>
<feature type="binding site" evidence="1">
    <location>
        <position position="306"/>
    </location>
    <ligand>
        <name>[4Fe-4S] cluster</name>
        <dbReference type="ChEBI" id="CHEBI:49883"/>
    </ligand>
</feature>
<organism>
    <name type="scientific">Clostridium acetobutylicum (strain ATCC 824 / DSM 792 / JCM 1419 / IAM 19013 / LMG 5710 / NBRC 13948 / NRRL B-527 / VKM B-1787 / 2291 / W)</name>
    <dbReference type="NCBI Taxonomy" id="272562"/>
    <lineage>
        <taxon>Bacteria</taxon>
        <taxon>Bacillati</taxon>
        <taxon>Bacillota</taxon>
        <taxon>Clostridia</taxon>
        <taxon>Eubacteriales</taxon>
        <taxon>Clostridiaceae</taxon>
        <taxon>Clostridium</taxon>
    </lineage>
</organism>
<name>ISPG_CLOAB</name>